<reference key="1">
    <citation type="journal article" date="1998" name="Nature">
        <title>Deciphering the biology of Mycobacterium tuberculosis from the complete genome sequence.</title>
        <authorList>
            <person name="Cole S.T."/>
            <person name="Brosch R."/>
            <person name="Parkhill J."/>
            <person name="Garnier T."/>
            <person name="Churcher C.M."/>
            <person name="Harris D.E."/>
            <person name="Gordon S.V."/>
            <person name="Eiglmeier K."/>
            <person name="Gas S."/>
            <person name="Barry C.E. III"/>
            <person name="Tekaia F."/>
            <person name="Badcock K."/>
            <person name="Basham D."/>
            <person name="Brown D."/>
            <person name="Chillingworth T."/>
            <person name="Connor R."/>
            <person name="Davies R.M."/>
            <person name="Devlin K."/>
            <person name="Feltwell T."/>
            <person name="Gentles S."/>
            <person name="Hamlin N."/>
            <person name="Holroyd S."/>
            <person name="Hornsby T."/>
            <person name="Jagels K."/>
            <person name="Krogh A."/>
            <person name="McLean J."/>
            <person name="Moule S."/>
            <person name="Murphy L.D."/>
            <person name="Oliver S."/>
            <person name="Osborne J."/>
            <person name="Quail M.A."/>
            <person name="Rajandream M.A."/>
            <person name="Rogers J."/>
            <person name="Rutter S."/>
            <person name="Seeger K."/>
            <person name="Skelton S."/>
            <person name="Squares S."/>
            <person name="Squares R."/>
            <person name="Sulston J.E."/>
            <person name="Taylor K."/>
            <person name="Whitehead S."/>
            <person name="Barrell B.G."/>
        </authorList>
    </citation>
    <scope>NUCLEOTIDE SEQUENCE [LARGE SCALE GENOMIC DNA]</scope>
    <source>
        <strain>ATCC 25618 / H37Rv</strain>
    </source>
</reference>
<reference key="2">
    <citation type="journal article" date="2002" name="J. Bacteriol.">
        <title>Definition of the mycobacterial SOS box and use to identify LexA-regulated genes in Mycobacterium tuberculosis.</title>
        <authorList>
            <person name="Davis E.O."/>
            <person name="Dullaghan E.M."/>
            <person name="Rand L."/>
        </authorList>
    </citation>
    <scope>INDUCTION BY LEXA</scope>
    <source>
        <strain>ATCC 25618 / H37Rv</strain>
    </source>
</reference>
<reference key="3">
    <citation type="journal article" date="2003" name="Cell">
        <title>DnaE2 polymerase contributes to in vivo survival and the emergence of drug resistance in Mycobacterium tuberculosis.</title>
        <authorList>
            <person name="Boshoff H.I.M."/>
            <person name="Reed M.B."/>
            <person name="Barry C.E. III"/>
            <person name="Mizrahi V."/>
        </authorList>
    </citation>
    <scope>FUNCTION</scope>
    <source>
        <strain>ATCC 25618 / H37Rv</strain>
    </source>
</reference>
<proteinExistence type="evidence at transcript level"/>
<gene>
    <name type="primary">dnaE2</name>
    <name type="ordered locus">Rv3370c</name>
</gene>
<organism>
    <name type="scientific">Mycobacterium tuberculosis (strain ATCC 25618 / H37Rv)</name>
    <dbReference type="NCBI Taxonomy" id="83332"/>
    <lineage>
        <taxon>Bacteria</taxon>
        <taxon>Bacillati</taxon>
        <taxon>Actinomycetota</taxon>
        <taxon>Actinomycetes</taxon>
        <taxon>Mycobacteriales</taxon>
        <taxon>Mycobacteriaceae</taxon>
        <taxon>Mycobacterium</taxon>
        <taxon>Mycobacterium tuberculosis complex</taxon>
    </lineage>
</organism>
<protein>
    <recommendedName>
        <fullName>Error-prone DNA polymerase</fullName>
        <ecNumber>2.7.7.7</ecNumber>
    </recommendedName>
</protein>
<accession>P9WNT5</accession>
<accession>L0TF55</accession>
<accession>O50399</accession>
<accession>Q7D5L9</accession>
<dbReference type="EC" id="2.7.7.7"/>
<dbReference type="EMBL" id="AL123456">
    <property type="protein sequence ID" value="CCP46191.1"/>
    <property type="status" value="ALT_INIT"/>
    <property type="molecule type" value="Genomic_DNA"/>
</dbReference>
<dbReference type="PIR" id="A70972">
    <property type="entry name" value="A70972"/>
</dbReference>
<dbReference type="RefSeq" id="NP_217887.3">
    <property type="nucleotide sequence ID" value="NC_000962.3"/>
</dbReference>
<dbReference type="SMR" id="P9WNT5"/>
<dbReference type="IntAct" id="P9WNT5">
    <property type="interactions" value="1"/>
</dbReference>
<dbReference type="STRING" id="83332.Rv3370c"/>
<dbReference type="PaxDb" id="83332-Rv3370c"/>
<dbReference type="GeneID" id="887259"/>
<dbReference type="KEGG" id="mtu:Rv3370c"/>
<dbReference type="PATRIC" id="fig|83332.12.peg.3764"/>
<dbReference type="TubercuList" id="Rv3370c"/>
<dbReference type="eggNOG" id="COG0587">
    <property type="taxonomic scope" value="Bacteria"/>
</dbReference>
<dbReference type="InParanoid" id="P9WNT5"/>
<dbReference type="OrthoDB" id="9803237at2"/>
<dbReference type="Proteomes" id="UP000001584">
    <property type="component" value="Chromosome"/>
</dbReference>
<dbReference type="GO" id="GO:0005737">
    <property type="term" value="C:cytoplasm"/>
    <property type="evidence" value="ECO:0007669"/>
    <property type="project" value="UniProtKB-SubCell"/>
</dbReference>
<dbReference type="GO" id="GO:0009274">
    <property type="term" value="C:peptidoglycan-based cell wall"/>
    <property type="evidence" value="ECO:0007005"/>
    <property type="project" value="MTBBASE"/>
</dbReference>
<dbReference type="GO" id="GO:0005886">
    <property type="term" value="C:plasma membrane"/>
    <property type="evidence" value="ECO:0007005"/>
    <property type="project" value="MTBBASE"/>
</dbReference>
<dbReference type="GO" id="GO:0008408">
    <property type="term" value="F:3'-5' exonuclease activity"/>
    <property type="evidence" value="ECO:0007669"/>
    <property type="project" value="InterPro"/>
</dbReference>
<dbReference type="GO" id="GO:0003887">
    <property type="term" value="F:DNA-directed DNA polymerase activity"/>
    <property type="evidence" value="ECO:0000318"/>
    <property type="project" value="GO_Central"/>
</dbReference>
<dbReference type="GO" id="GO:0003676">
    <property type="term" value="F:nucleic acid binding"/>
    <property type="evidence" value="ECO:0007669"/>
    <property type="project" value="InterPro"/>
</dbReference>
<dbReference type="GO" id="GO:0006281">
    <property type="term" value="P:DNA repair"/>
    <property type="evidence" value="ECO:0000314"/>
    <property type="project" value="MTBBASE"/>
</dbReference>
<dbReference type="GO" id="GO:0006260">
    <property type="term" value="P:DNA replication"/>
    <property type="evidence" value="ECO:0007669"/>
    <property type="project" value="UniProtKB-KW"/>
</dbReference>
<dbReference type="GO" id="GO:0042276">
    <property type="term" value="P:error-prone translesion synthesis"/>
    <property type="evidence" value="ECO:0000314"/>
    <property type="project" value="MTBBASE"/>
</dbReference>
<dbReference type="GO" id="GO:0046677">
    <property type="term" value="P:response to antibiotic"/>
    <property type="evidence" value="ECO:0000270"/>
    <property type="project" value="MTBBASE"/>
</dbReference>
<dbReference type="CDD" id="cd04485">
    <property type="entry name" value="DnaE_OBF"/>
    <property type="match status" value="1"/>
</dbReference>
<dbReference type="FunFam" id="1.10.150.870:FF:000002">
    <property type="entry name" value="Error-prone DNA polymerase"/>
    <property type="match status" value="1"/>
</dbReference>
<dbReference type="FunFam" id="3.20.20.140:FF:000150">
    <property type="entry name" value="Error-prone DNA polymerase"/>
    <property type="match status" value="1"/>
</dbReference>
<dbReference type="Gene3D" id="1.10.150.870">
    <property type="match status" value="1"/>
</dbReference>
<dbReference type="Gene3D" id="3.20.20.140">
    <property type="entry name" value="Metal-dependent hydrolases"/>
    <property type="match status" value="1"/>
</dbReference>
<dbReference type="HAMAP" id="MF_01902">
    <property type="entry name" value="DNApol_error_prone"/>
    <property type="match status" value="1"/>
</dbReference>
<dbReference type="InterPro" id="IPR011708">
    <property type="entry name" value="DNA_pol3_alpha_NTPase_dom"/>
</dbReference>
<dbReference type="InterPro" id="IPR040982">
    <property type="entry name" value="DNA_pol3_finger"/>
</dbReference>
<dbReference type="InterPro" id="IPR023073">
    <property type="entry name" value="DnaE2"/>
</dbReference>
<dbReference type="InterPro" id="IPR004805">
    <property type="entry name" value="DnaE2/DnaE/PolC"/>
</dbReference>
<dbReference type="InterPro" id="IPR029460">
    <property type="entry name" value="DNAPol_HHH"/>
</dbReference>
<dbReference type="InterPro" id="IPR004365">
    <property type="entry name" value="NA-bd_OB_tRNA"/>
</dbReference>
<dbReference type="InterPro" id="IPR004013">
    <property type="entry name" value="PHP_dom"/>
</dbReference>
<dbReference type="InterPro" id="IPR003141">
    <property type="entry name" value="Pol/His_phosphatase_N"/>
</dbReference>
<dbReference type="InterPro" id="IPR016195">
    <property type="entry name" value="Pol/histidinol_Pase-like"/>
</dbReference>
<dbReference type="NCBIfam" id="TIGR00594">
    <property type="entry name" value="polc"/>
    <property type="match status" value="1"/>
</dbReference>
<dbReference type="NCBIfam" id="NF004225">
    <property type="entry name" value="PRK05672.1"/>
    <property type="match status" value="1"/>
</dbReference>
<dbReference type="PANTHER" id="PTHR32294">
    <property type="entry name" value="DNA POLYMERASE III SUBUNIT ALPHA"/>
    <property type="match status" value="1"/>
</dbReference>
<dbReference type="PANTHER" id="PTHR32294:SF4">
    <property type="entry name" value="ERROR-PRONE DNA POLYMERASE"/>
    <property type="match status" value="1"/>
</dbReference>
<dbReference type="Pfam" id="PF07733">
    <property type="entry name" value="DNA_pol3_alpha"/>
    <property type="match status" value="1"/>
</dbReference>
<dbReference type="Pfam" id="PF17657">
    <property type="entry name" value="DNA_pol3_finger"/>
    <property type="match status" value="1"/>
</dbReference>
<dbReference type="Pfam" id="PF14579">
    <property type="entry name" value="HHH_6"/>
    <property type="match status" value="1"/>
</dbReference>
<dbReference type="Pfam" id="PF02811">
    <property type="entry name" value="PHP"/>
    <property type="match status" value="1"/>
</dbReference>
<dbReference type="Pfam" id="PF01336">
    <property type="entry name" value="tRNA_anti-codon"/>
    <property type="match status" value="1"/>
</dbReference>
<dbReference type="SMART" id="SM00481">
    <property type="entry name" value="POLIIIAc"/>
    <property type="match status" value="1"/>
</dbReference>
<dbReference type="SUPFAM" id="SSF89550">
    <property type="entry name" value="PHP domain-like"/>
    <property type="match status" value="1"/>
</dbReference>
<comment type="function">
    <text evidence="4">DNA polymerase involved in damage-induced mutagenesis and translesion synthesis (TLS). It is not the major replicative DNA polymerase. Does not appear to be essential for chromosomal replication. May be involved in generating antibiotic resistance.</text>
</comment>
<comment type="catalytic activity">
    <reaction>
        <text>DNA(n) + a 2'-deoxyribonucleoside 5'-triphosphate = DNA(n+1) + diphosphate</text>
        <dbReference type="Rhea" id="RHEA:22508"/>
        <dbReference type="Rhea" id="RHEA-COMP:17339"/>
        <dbReference type="Rhea" id="RHEA-COMP:17340"/>
        <dbReference type="ChEBI" id="CHEBI:33019"/>
        <dbReference type="ChEBI" id="CHEBI:61560"/>
        <dbReference type="ChEBI" id="CHEBI:173112"/>
        <dbReference type="EC" id="2.7.7.7"/>
    </reaction>
</comment>
<comment type="subcellular location">
    <subcellularLocation>
        <location evidence="1">Cytoplasm</location>
    </subcellularLocation>
</comment>
<comment type="induction">
    <text evidence="3">Up-regulated in response to all forms of DNA damage. LexA-regulated.</text>
</comment>
<comment type="similarity">
    <text evidence="5">Belongs to the DNA polymerase type-C family. DnaE2 subfamily.</text>
</comment>
<comment type="sequence caution" evidence="5">
    <conflict type="erroneous initiation">
        <sequence resource="EMBL-CDS" id="CCP46191"/>
    </conflict>
    <text>Truncated N-terminus.</text>
</comment>
<name>DNAE2_MYCTU</name>
<keyword id="KW-0963">Cytoplasm</keyword>
<keyword id="KW-0227">DNA damage</keyword>
<keyword id="KW-0234">DNA repair</keyword>
<keyword id="KW-0235">DNA replication</keyword>
<keyword id="KW-0239">DNA-directed DNA polymerase</keyword>
<keyword id="KW-0548">Nucleotidyltransferase</keyword>
<keyword id="KW-1185">Reference proteome</keyword>
<keyword id="KW-0808">Transferase</keyword>
<feature type="chain" id="PRO_0000103385" description="Error-prone DNA polymerase">
    <location>
        <begin position="1"/>
        <end position="1098"/>
    </location>
</feature>
<feature type="region of interest" description="Disordered" evidence="2">
    <location>
        <begin position="34"/>
        <end position="57"/>
    </location>
</feature>
<evidence type="ECO:0000250" key="1"/>
<evidence type="ECO:0000256" key="2">
    <source>
        <dbReference type="SAM" id="MobiDB-lite"/>
    </source>
</evidence>
<evidence type="ECO:0000269" key="3">
    <source>
    </source>
</evidence>
<evidence type="ECO:0000269" key="4">
    <source>
    </source>
</evidence>
<evidence type="ECO:0000305" key="5"/>
<sequence>MFDILWNVGWSNGPPSWAEMERVLNGKPRHAGVPAFDADGDVPRSRKRGAYQPPGRERVGSSVAYAELHAHSAYSFLDGASTPEELVEEAARLGLCALALTDHDGLYGAVRFAEAAAELDVRTVFGAELSLGATARTERPDPPGPHLLVLARGPEGYRRLSRQLAAAHLAGGEKGKPRYDFDALTEAAGGHWHILTGCRKGHVRQALSQGGPAAAQRALADLVDRFTPSRVSIELTHHGHPLDDERNAALAGLAPRFGVGIVATTGAHFADPSRGRLAMAMAAIRARRSLDSAAGWLAPLGGAHLRSGEEMARLFAWCPEAVTAAAELGERCAFGLQLIAPRLPPFDVPDGHTEDSWLRSLVMAGARERYGPPKSAPRAYSQIEHELKVIAQLRFPGYFLVVHDITRFCRDNDILCQGRGSAANSAVCYALGVTAVDPVANELLFERFLSPARDGPPDIDIDIESDQREKVIQYVYHKYGRDYAAQVANVITYRGRSAVRDMARALGFSPGQQDAWSKQVSHWTGQADDVDGIPEQVIDLATQIRNLPRHLGIHSGGMVICDRPIADVCPVEWARMANRSVLQWDKDDCAAIGLVKFDLLGLGMLSALHYAKDLVAEHKGIEVDLARLDLSEPAVYEMLARADSVGVFQVESRAQMATLPRLKPRVFYDLVVEVALIRPGPIQGGSVHPYIRRRNGVDPVIYEHPSMAPALRKTLGVPLFQEQLMQLAVDCAGFSAAEADQLRRAMGSKRSTERMRRLRGRFYDGMRALHGAPDEVIDRIYEKLEAFANFGFPESHALSFASLVFYSAWFKLHHPAAFCAALLRAQPMGFYSPQSLVADARRHGVAVHGPCVNASLAHATCENAGTEVRLGLGAVRYLGAELAEKLVAERTANGPFTSLPDLTSRVQLSVPQVEALATAGALGCFGMSRREALWAAGAAATGRPDRLPGVGSSSHIPALPGMSELELAAADVWATGVSPDSYPTQFLRADLDAMGVLPAERLGSVSDGDRVLIAGAVTHRQRPATAQGVTFINLEDETGMVNVLCTPGVWARHRKLAHTAPALLIRGQVQNASGAITVVAERMGRLTLAVGARSRDFR</sequence>